<proteinExistence type="inferred from homology"/>
<protein>
    <recommendedName>
        <fullName>C-C motif chemokine 5</fullName>
    </recommendedName>
    <alternativeName>
        <fullName>Small-inducible cytokine A5</fullName>
    </alternativeName>
    <alternativeName>
        <fullName>T-cell-specific protein RANTES</fullName>
    </alternativeName>
</protein>
<keyword id="KW-0145">Chemotaxis</keyword>
<keyword id="KW-0202">Cytokine</keyword>
<keyword id="KW-1015">Disulfide bond</keyword>
<keyword id="KW-0395">Inflammatory response</keyword>
<keyword id="KW-1185">Reference proteome</keyword>
<keyword id="KW-0964">Secreted</keyword>
<keyword id="KW-0732">Signal</keyword>
<comment type="function">
    <text evidence="2">Chemoattractant for blood monocytes, memory T-helper cells and eosinophils. Causes the release of histamine from basophils and activates eosinophils. May activate several chemokine receptors including CCR1, CCR3, CCR4 and CCR5. May also be an agonist of the G protein-coupled receptor GPR75. Together with GPR75, may play a role in neuron survival through activation of a downstream signaling pathway involving the PI3, Akt and MAP kinases. By activating GPR75 may also play a role in insulin secretion by islet cells.</text>
</comment>
<comment type="subcellular location">
    <subcellularLocation>
        <location>Secreted</location>
    </subcellularLocation>
</comment>
<comment type="similarity">
    <text evidence="4">Belongs to the intercrine beta (chemokine CC) family.</text>
</comment>
<feature type="signal peptide" evidence="3">
    <location>
        <begin position="1"/>
        <end position="23"/>
    </location>
</feature>
<feature type="chain" id="PRO_0000005173" description="C-C motif chemokine 5">
    <location>
        <begin position="24"/>
        <end position="92"/>
    </location>
</feature>
<feature type="disulfide bond" evidence="1">
    <location>
        <begin position="33"/>
        <end position="57"/>
    </location>
</feature>
<feature type="disulfide bond" evidence="1">
    <location>
        <begin position="34"/>
        <end position="73"/>
    </location>
</feature>
<organism>
    <name type="scientific">Felis catus</name>
    <name type="common">Cat</name>
    <name type="synonym">Felis silvestris catus</name>
    <dbReference type="NCBI Taxonomy" id="9685"/>
    <lineage>
        <taxon>Eukaryota</taxon>
        <taxon>Metazoa</taxon>
        <taxon>Chordata</taxon>
        <taxon>Craniata</taxon>
        <taxon>Vertebrata</taxon>
        <taxon>Euteleostomi</taxon>
        <taxon>Mammalia</taxon>
        <taxon>Eutheria</taxon>
        <taxon>Laurasiatheria</taxon>
        <taxon>Carnivora</taxon>
        <taxon>Feliformia</taxon>
        <taxon>Felidae</taxon>
        <taxon>Felinae</taxon>
        <taxon>Felis</taxon>
    </lineage>
</organism>
<reference key="1">
    <citation type="submission" date="2002-04" db="EMBL/GenBank/DDBJ databases">
        <title>Molecular cloning of feline RANTES gene.</title>
        <authorList>
            <person name="Kimura T."/>
            <person name="Kano R."/>
            <person name="Hasegawa A."/>
        </authorList>
    </citation>
    <scope>NUCLEOTIDE SEQUENCE [MRNA]</scope>
</reference>
<sequence>MKVSTAAFAVLLTAAAFCTPASASPYASDTTPCCFAYLSHPLPLTHLQEYFYTSSKCSMPAVVFVTRRKRQVCANPQKKWVRDKGINSLEMN</sequence>
<gene>
    <name type="primary">CCL5</name>
    <name type="synonym">SCYA5</name>
</gene>
<name>CCL5_FELCA</name>
<accession>Q8SQ40</accession>
<dbReference type="EMBL" id="AB083479">
    <property type="protein sequence ID" value="BAB88940.1"/>
    <property type="molecule type" value="mRNA"/>
</dbReference>
<dbReference type="RefSeq" id="NP_001009827.1">
    <property type="nucleotide sequence ID" value="NM_001009827.1"/>
</dbReference>
<dbReference type="SMR" id="Q8SQ40"/>
<dbReference type="FunCoup" id="Q8SQ40">
    <property type="interactions" value="88"/>
</dbReference>
<dbReference type="STRING" id="9685.ENSFCAP00000001170"/>
<dbReference type="PaxDb" id="9685-ENSFCAP00000001170"/>
<dbReference type="GeneID" id="493689"/>
<dbReference type="KEGG" id="fca:493689"/>
<dbReference type="CTD" id="6352"/>
<dbReference type="eggNOG" id="ENOG502S8D1">
    <property type="taxonomic scope" value="Eukaryota"/>
</dbReference>
<dbReference type="InParanoid" id="Q8SQ40"/>
<dbReference type="OrthoDB" id="8900217at2759"/>
<dbReference type="Proteomes" id="UP000011712">
    <property type="component" value="Unplaced"/>
</dbReference>
<dbReference type="GO" id="GO:0005615">
    <property type="term" value="C:extracellular space"/>
    <property type="evidence" value="ECO:0000318"/>
    <property type="project" value="GO_Central"/>
</dbReference>
<dbReference type="GO" id="GO:0048020">
    <property type="term" value="F:CCR chemokine receptor binding"/>
    <property type="evidence" value="ECO:0000318"/>
    <property type="project" value="GO_Central"/>
</dbReference>
<dbReference type="GO" id="GO:0008009">
    <property type="term" value="F:chemokine activity"/>
    <property type="evidence" value="ECO:0000318"/>
    <property type="project" value="GO_Central"/>
</dbReference>
<dbReference type="GO" id="GO:0061844">
    <property type="term" value="P:antimicrobial humoral immune response mediated by antimicrobial peptide"/>
    <property type="evidence" value="ECO:0000318"/>
    <property type="project" value="GO_Central"/>
</dbReference>
<dbReference type="GO" id="GO:0070098">
    <property type="term" value="P:chemokine-mediated signaling pathway"/>
    <property type="evidence" value="ECO:0000250"/>
    <property type="project" value="UniProtKB"/>
</dbReference>
<dbReference type="GO" id="GO:0048245">
    <property type="term" value="P:eosinophil chemotaxis"/>
    <property type="evidence" value="ECO:0000318"/>
    <property type="project" value="GO_Central"/>
</dbReference>
<dbReference type="GO" id="GO:0007186">
    <property type="term" value="P:G protein-coupled receptor signaling pathway"/>
    <property type="evidence" value="ECO:0000250"/>
    <property type="project" value="UniProtKB"/>
</dbReference>
<dbReference type="GO" id="GO:0006954">
    <property type="term" value="P:inflammatory response"/>
    <property type="evidence" value="ECO:0000318"/>
    <property type="project" value="GO_Central"/>
</dbReference>
<dbReference type="GO" id="GO:0030335">
    <property type="term" value="P:positive regulation of cell migration"/>
    <property type="evidence" value="ECO:0000318"/>
    <property type="project" value="GO_Central"/>
</dbReference>
<dbReference type="GO" id="GO:0050796">
    <property type="term" value="P:regulation of insulin secretion"/>
    <property type="evidence" value="ECO:0000250"/>
    <property type="project" value="UniProtKB"/>
</dbReference>
<dbReference type="CDD" id="cd00272">
    <property type="entry name" value="Chemokine_CC"/>
    <property type="match status" value="1"/>
</dbReference>
<dbReference type="FunFam" id="2.40.50.40:FF:000002">
    <property type="entry name" value="C-C motif chemokine"/>
    <property type="match status" value="1"/>
</dbReference>
<dbReference type="Gene3D" id="2.40.50.40">
    <property type="match status" value="1"/>
</dbReference>
<dbReference type="InterPro" id="IPR039809">
    <property type="entry name" value="Chemokine_b/g/d"/>
</dbReference>
<dbReference type="InterPro" id="IPR000827">
    <property type="entry name" value="Chemokine_CC_CS"/>
</dbReference>
<dbReference type="InterPro" id="IPR001811">
    <property type="entry name" value="Chemokine_IL8-like_dom"/>
</dbReference>
<dbReference type="InterPro" id="IPR036048">
    <property type="entry name" value="Interleukin_8-like_sf"/>
</dbReference>
<dbReference type="PANTHER" id="PTHR12015:SF170">
    <property type="entry name" value="C-C MOTIF CHEMOKINE 5"/>
    <property type="match status" value="1"/>
</dbReference>
<dbReference type="PANTHER" id="PTHR12015">
    <property type="entry name" value="SMALL INDUCIBLE CYTOKINE A"/>
    <property type="match status" value="1"/>
</dbReference>
<dbReference type="Pfam" id="PF00048">
    <property type="entry name" value="IL8"/>
    <property type="match status" value="1"/>
</dbReference>
<dbReference type="SMART" id="SM00199">
    <property type="entry name" value="SCY"/>
    <property type="match status" value="1"/>
</dbReference>
<dbReference type="SUPFAM" id="SSF54117">
    <property type="entry name" value="Interleukin 8-like chemokines"/>
    <property type="match status" value="1"/>
</dbReference>
<dbReference type="PROSITE" id="PS00472">
    <property type="entry name" value="SMALL_CYTOKINES_CC"/>
    <property type="match status" value="1"/>
</dbReference>
<evidence type="ECO:0000250" key="1"/>
<evidence type="ECO:0000250" key="2">
    <source>
        <dbReference type="UniProtKB" id="P13501"/>
    </source>
</evidence>
<evidence type="ECO:0000255" key="3"/>
<evidence type="ECO:0000305" key="4"/>